<evidence type="ECO:0000255" key="1">
    <source>
        <dbReference type="HAMAP-Rule" id="MF_00340"/>
    </source>
</evidence>
<evidence type="ECO:0000256" key="2">
    <source>
        <dbReference type="SAM" id="MobiDB-lite"/>
    </source>
</evidence>
<evidence type="ECO:0000305" key="3"/>
<evidence type="ECO:0007829" key="4">
    <source>
        <dbReference type="PDB" id="7M4V"/>
    </source>
</evidence>
<protein>
    <recommendedName>
        <fullName evidence="1">Large ribosomal subunit protein bL32</fullName>
    </recommendedName>
    <alternativeName>
        <fullName evidence="3">50S ribosomal protein L32</fullName>
    </alternativeName>
</protein>
<comment type="similarity">
    <text evidence="1">Belongs to the bacterial ribosomal protein bL32 family.</text>
</comment>
<accession>B7I7A4</accession>
<gene>
    <name evidence="1" type="primary">rpmF</name>
    <name type="ordered locus">AB57_0869</name>
</gene>
<name>RL32_ACIB5</name>
<reference key="1">
    <citation type="journal article" date="2008" name="J. Bacteriol.">
        <title>Comparative genome sequence analysis of multidrug-resistant Acinetobacter baumannii.</title>
        <authorList>
            <person name="Adams M.D."/>
            <person name="Goglin K."/>
            <person name="Molyneaux N."/>
            <person name="Hujer K.M."/>
            <person name="Lavender H."/>
            <person name="Jamison J.J."/>
            <person name="MacDonald I.J."/>
            <person name="Martin K.M."/>
            <person name="Russo T."/>
            <person name="Campagnari A.A."/>
            <person name="Hujer A.M."/>
            <person name="Bonomo R.A."/>
            <person name="Gill S.R."/>
        </authorList>
    </citation>
    <scope>NUCLEOTIDE SEQUENCE [LARGE SCALE GENOMIC DNA]</scope>
    <source>
        <strain>AB0057</strain>
    </source>
</reference>
<dbReference type="EMBL" id="CP001182">
    <property type="protein sequence ID" value="ACJ40663.1"/>
    <property type="molecule type" value="Genomic_DNA"/>
</dbReference>
<dbReference type="RefSeq" id="WP_000290730.1">
    <property type="nucleotide sequence ID" value="NC_011586.2"/>
</dbReference>
<dbReference type="PDB" id="6V39">
    <property type="method" value="EM"/>
    <property type="resolution" value="3.04 A"/>
    <property type="chains" value="Z=1-61"/>
</dbReference>
<dbReference type="PDB" id="6V3A">
    <property type="method" value="EM"/>
    <property type="resolution" value="2.82 A"/>
    <property type="chains" value="Z=1-61"/>
</dbReference>
<dbReference type="PDB" id="6V3B">
    <property type="method" value="EM"/>
    <property type="resolution" value="2.91 A"/>
    <property type="chains" value="Z=1-61"/>
</dbReference>
<dbReference type="PDB" id="6V3D">
    <property type="method" value="EM"/>
    <property type="resolution" value="2.95 A"/>
    <property type="chains" value="Z=1-61"/>
</dbReference>
<dbReference type="PDB" id="7M4V">
    <property type="method" value="EM"/>
    <property type="resolution" value="2.54 A"/>
    <property type="chains" value="Z=1-61"/>
</dbReference>
<dbReference type="PDB" id="7M4W">
    <property type="method" value="EM"/>
    <property type="resolution" value="2.55 A"/>
    <property type="chains" value="Z=1-61"/>
</dbReference>
<dbReference type="PDB" id="7M4X">
    <property type="method" value="EM"/>
    <property type="resolution" value="2.66 A"/>
    <property type="chains" value="Z=1-61"/>
</dbReference>
<dbReference type="PDB" id="7M4Y">
    <property type="method" value="EM"/>
    <property type="resolution" value="2.50 A"/>
    <property type="chains" value="Z=1-61"/>
</dbReference>
<dbReference type="PDB" id="7M4Z">
    <property type="method" value="EM"/>
    <property type="resolution" value="2.92 A"/>
    <property type="chains" value="Z=1-61"/>
</dbReference>
<dbReference type="PDB" id="7RYF">
    <property type="method" value="EM"/>
    <property type="resolution" value="2.65 A"/>
    <property type="chains" value="Z=1-61"/>
</dbReference>
<dbReference type="PDB" id="7RYG">
    <property type="method" value="EM"/>
    <property type="resolution" value="2.38 A"/>
    <property type="chains" value="Z=1-61"/>
</dbReference>
<dbReference type="PDB" id="7RYH">
    <property type="method" value="EM"/>
    <property type="resolution" value="2.43 A"/>
    <property type="chains" value="Z=1-61"/>
</dbReference>
<dbReference type="PDB" id="7UVV">
    <property type="method" value="EM"/>
    <property type="resolution" value="2.50 A"/>
    <property type="chains" value="Z=1-61"/>
</dbReference>
<dbReference type="PDB" id="7UVW">
    <property type="method" value="EM"/>
    <property type="resolution" value="2.37 A"/>
    <property type="chains" value="Z=1-61"/>
</dbReference>
<dbReference type="PDB" id="7UVX">
    <property type="method" value="EM"/>
    <property type="resolution" value="2.35 A"/>
    <property type="chains" value="Z=1-61"/>
</dbReference>
<dbReference type="PDB" id="7UVY">
    <property type="method" value="EM"/>
    <property type="resolution" value="2.39 A"/>
    <property type="chains" value="Z=1-61"/>
</dbReference>
<dbReference type="PDB" id="7UVZ">
    <property type="method" value="EM"/>
    <property type="resolution" value="2.21 A"/>
    <property type="chains" value="Z=1-61"/>
</dbReference>
<dbReference type="PDB" id="7UW1">
    <property type="method" value="EM"/>
    <property type="resolution" value="2.21 A"/>
    <property type="chains" value="Z=1-61"/>
</dbReference>
<dbReference type="PDBsum" id="6V39"/>
<dbReference type="PDBsum" id="6V3A"/>
<dbReference type="PDBsum" id="6V3B"/>
<dbReference type="PDBsum" id="6V3D"/>
<dbReference type="PDBsum" id="7M4V"/>
<dbReference type="PDBsum" id="7M4W"/>
<dbReference type="PDBsum" id="7M4X"/>
<dbReference type="PDBsum" id="7M4Y"/>
<dbReference type="PDBsum" id="7M4Z"/>
<dbReference type="PDBsum" id="7RYF"/>
<dbReference type="PDBsum" id="7RYG"/>
<dbReference type="PDBsum" id="7RYH"/>
<dbReference type="PDBsum" id="7UVV"/>
<dbReference type="PDBsum" id="7UVW"/>
<dbReference type="PDBsum" id="7UVX"/>
<dbReference type="PDBsum" id="7UVY"/>
<dbReference type="PDBsum" id="7UVZ"/>
<dbReference type="PDBsum" id="7UW1"/>
<dbReference type="EMDB" id="EMD-21030"/>
<dbReference type="EMDB" id="EMD-21031"/>
<dbReference type="EMDB" id="EMD-21032"/>
<dbReference type="EMDB" id="EMD-21033"/>
<dbReference type="EMDB" id="EMD-23667"/>
<dbReference type="EMDB" id="EMD-23668"/>
<dbReference type="EMDB" id="EMD-23669"/>
<dbReference type="EMDB" id="EMD-23670"/>
<dbReference type="EMDB" id="EMD-23671"/>
<dbReference type="EMDB" id="EMD-24738"/>
<dbReference type="EMDB" id="EMD-24739"/>
<dbReference type="EMDB" id="EMD-24740"/>
<dbReference type="EMDB" id="EMD-26817"/>
<dbReference type="EMDB" id="EMD-26818"/>
<dbReference type="EMDB" id="EMD-26819"/>
<dbReference type="EMDB" id="EMD-26820"/>
<dbReference type="EMDB" id="EMD-26821"/>
<dbReference type="EMDB" id="EMD-26822"/>
<dbReference type="SMR" id="B7I7A4"/>
<dbReference type="IntAct" id="B7I7A4">
    <property type="interactions" value="2"/>
</dbReference>
<dbReference type="GeneID" id="9383546"/>
<dbReference type="KEGG" id="abn:AB57_0869"/>
<dbReference type="HOGENOM" id="CLU_129084_2_1_6"/>
<dbReference type="Proteomes" id="UP000007094">
    <property type="component" value="Chromosome"/>
</dbReference>
<dbReference type="GO" id="GO:0015934">
    <property type="term" value="C:large ribosomal subunit"/>
    <property type="evidence" value="ECO:0007669"/>
    <property type="project" value="InterPro"/>
</dbReference>
<dbReference type="GO" id="GO:0003735">
    <property type="term" value="F:structural constituent of ribosome"/>
    <property type="evidence" value="ECO:0007669"/>
    <property type="project" value="InterPro"/>
</dbReference>
<dbReference type="GO" id="GO:0006412">
    <property type="term" value="P:translation"/>
    <property type="evidence" value="ECO:0007669"/>
    <property type="project" value="UniProtKB-UniRule"/>
</dbReference>
<dbReference type="HAMAP" id="MF_00340">
    <property type="entry name" value="Ribosomal_bL32"/>
    <property type="match status" value="1"/>
</dbReference>
<dbReference type="InterPro" id="IPR002677">
    <property type="entry name" value="Ribosomal_bL32"/>
</dbReference>
<dbReference type="InterPro" id="IPR044957">
    <property type="entry name" value="Ribosomal_bL32_bact"/>
</dbReference>
<dbReference type="InterPro" id="IPR011332">
    <property type="entry name" value="Ribosomal_zn-bd"/>
</dbReference>
<dbReference type="NCBIfam" id="TIGR01031">
    <property type="entry name" value="rpmF_bact"/>
    <property type="match status" value="1"/>
</dbReference>
<dbReference type="PANTHER" id="PTHR35534">
    <property type="entry name" value="50S RIBOSOMAL PROTEIN L32"/>
    <property type="match status" value="1"/>
</dbReference>
<dbReference type="PANTHER" id="PTHR35534:SF1">
    <property type="entry name" value="LARGE RIBOSOMAL SUBUNIT PROTEIN BL32"/>
    <property type="match status" value="1"/>
</dbReference>
<dbReference type="Pfam" id="PF01783">
    <property type="entry name" value="Ribosomal_L32p"/>
    <property type="match status" value="1"/>
</dbReference>
<dbReference type="SUPFAM" id="SSF57829">
    <property type="entry name" value="Zn-binding ribosomal proteins"/>
    <property type="match status" value="1"/>
</dbReference>
<organism>
    <name type="scientific">Acinetobacter baumannii (strain AB0057)</name>
    <dbReference type="NCBI Taxonomy" id="480119"/>
    <lineage>
        <taxon>Bacteria</taxon>
        <taxon>Pseudomonadati</taxon>
        <taxon>Pseudomonadota</taxon>
        <taxon>Gammaproteobacteria</taxon>
        <taxon>Moraxellales</taxon>
        <taxon>Moraxellaceae</taxon>
        <taxon>Acinetobacter</taxon>
        <taxon>Acinetobacter calcoaceticus/baumannii complex</taxon>
    </lineage>
</organism>
<feature type="chain" id="PRO_1000120072" description="Large ribosomal subunit protein bL32">
    <location>
        <begin position="1"/>
        <end position="61"/>
    </location>
</feature>
<feature type="region of interest" description="Disordered" evidence="2">
    <location>
        <begin position="1"/>
        <end position="44"/>
    </location>
</feature>
<feature type="compositionally biased region" description="Basic residues" evidence="2">
    <location>
        <begin position="7"/>
        <end position="16"/>
    </location>
</feature>
<feature type="compositionally biased region" description="Polar residues" evidence="2">
    <location>
        <begin position="25"/>
        <end position="34"/>
    </location>
</feature>
<feature type="helix" evidence="4">
    <location>
        <begin position="10"/>
        <end position="16"/>
    </location>
</feature>
<feature type="helix" evidence="4">
    <location>
        <begin position="17"/>
        <end position="19"/>
    </location>
</feature>
<feature type="strand" evidence="4">
    <location>
        <begin position="27"/>
        <end position="30"/>
    </location>
</feature>
<feature type="turn" evidence="4">
    <location>
        <begin position="31"/>
        <end position="34"/>
    </location>
</feature>
<feature type="strand" evidence="4">
    <location>
        <begin position="35"/>
        <end position="38"/>
    </location>
</feature>
<feature type="strand" evidence="4">
    <location>
        <begin position="46"/>
        <end position="48"/>
    </location>
</feature>
<keyword id="KW-0002">3D-structure</keyword>
<keyword id="KW-0687">Ribonucleoprotein</keyword>
<keyword id="KW-0689">Ribosomal protein</keyword>
<proteinExistence type="evidence at protein level"/>
<sequence>MAVQQNRKSRSRRDMRRSHDALTENALTVDQATGETHRRHHVTKDGFYRGRQLFAKAADAE</sequence>